<keyword id="KW-0002">3D-structure</keyword>
<keyword id="KW-0066">ATP synthesis</keyword>
<keyword id="KW-0067">ATP-binding</keyword>
<keyword id="KW-1003">Cell membrane</keyword>
<keyword id="KW-0139">CF(1)</keyword>
<keyword id="KW-0903">Direct protein sequencing</keyword>
<keyword id="KW-0375">Hydrogen ion transport</keyword>
<keyword id="KW-0406">Ion transport</keyword>
<keyword id="KW-0472">Membrane</keyword>
<keyword id="KW-0547">Nucleotide-binding</keyword>
<keyword id="KW-1278">Translocase</keyword>
<keyword id="KW-0813">Transport</keyword>
<proteinExistence type="evidence at protein level"/>
<reference key="1">
    <citation type="journal article" date="1986" name="J. Biochem.">
        <title>Stable structure of thermophilic proton ATPase beta subunit.</title>
        <authorList>
            <person name="Kagawa Y."/>
            <person name="Ishizuka M."/>
            <person name="Saishu T."/>
            <person name="Nakao S."/>
        </authorList>
    </citation>
    <scope>NUCLEOTIDE SEQUENCE [GENOMIC DNA]</scope>
    <scope>PROTEIN SEQUENCE OF 1-19</scope>
    <scope>SUBUNIT</scope>
</reference>
<reference key="2">
    <citation type="journal article" date="1988" name="Biochim. Biophys. Acta">
        <title>Sequence and over-expression of subunits of adenosine triphosphate synthase in thermophilic bacterium PS3.</title>
        <authorList>
            <person name="Ohta S."/>
            <person name="Yohda M."/>
            <person name="Ishizuka M."/>
            <person name="Hirata H."/>
            <person name="Hamamoto T."/>
            <person name="Otawara-Hamamoto Y."/>
            <person name="Matsuda K."/>
            <person name="Kagawa Y."/>
        </authorList>
    </citation>
    <scope>NUCLEOTIDE SEQUENCE [GENOMIC DNA]</scope>
</reference>
<reference key="3">
    <citation type="journal article" date="1997" name="Structure">
        <title>The crystal structure of the nucleotide-free alpha 3 beta 3 subcomplex of F1-ATPase from the thermophilic Bacillus PS3 is a symmetric trimer.</title>
        <authorList>
            <person name="Shirakihara Y."/>
            <person name="Leslie A.G.W."/>
            <person name="Abrahams J.P."/>
            <person name="Walker J.E."/>
            <person name="Ueda T."/>
            <person name="Seikimoto Y."/>
            <person name="Kambara M."/>
            <person name="Saika K."/>
            <person name="Kagawa Y."/>
            <person name="Yoshida M."/>
        </authorList>
    </citation>
    <scope>X-RAY CRYSTALLOGRAPHY (3.2 ANGSTROMS)</scope>
</reference>
<dbReference type="EC" id="7.1.2.2" evidence="1"/>
<dbReference type="EMBL" id="D00113">
    <property type="protein sequence ID" value="BAA00066.1"/>
    <property type="molecule type" value="Genomic_DNA"/>
</dbReference>
<dbReference type="EMBL" id="X04609">
    <property type="protein sequence ID" value="CAA28277.1"/>
    <property type="molecule type" value="Genomic_DNA"/>
</dbReference>
<dbReference type="EMBL" id="X07804">
    <property type="protein sequence ID" value="CAA30655.1"/>
    <property type="molecule type" value="Genomic_DNA"/>
</dbReference>
<dbReference type="PDB" id="1SKY">
    <property type="method" value="X-ray"/>
    <property type="resolution" value="3.20 A"/>
    <property type="chains" value="E=1-473"/>
</dbReference>
<dbReference type="PDB" id="7L1Q">
    <property type="method" value="EM"/>
    <property type="resolution" value="3.40 A"/>
    <property type="chains" value="D/E/F=1-473"/>
</dbReference>
<dbReference type="PDB" id="7L1R">
    <property type="method" value="EM"/>
    <property type="resolution" value="3.10 A"/>
    <property type="chains" value="D/E/F=1-473"/>
</dbReference>
<dbReference type="PDB" id="7L1S">
    <property type="method" value="EM"/>
    <property type="resolution" value="3.60 A"/>
    <property type="chains" value="D/E/F=1-473"/>
</dbReference>
<dbReference type="PDB" id="7XKH">
    <property type="method" value="EM"/>
    <property type="resolution" value="3.10 A"/>
    <property type="chains" value="D/E/F=1-473"/>
</dbReference>
<dbReference type="PDB" id="7XKO">
    <property type="method" value="EM"/>
    <property type="resolution" value="3.40 A"/>
    <property type="chains" value="D/E/F=1-473"/>
</dbReference>
<dbReference type="PDB" id="7XKP">
    <property type="method" value="EM"/>
    <property type="resolution" value="3.00 A"/>
    <property type="chains" value="D/E/F=1-473"/>
</dbReference>
<dbReference type="PDB" id="7XKQ">
    <property type="method" value="EM"/>
    <property type="resolution" value="3.30 A"/>
    <property type="chains" value="D/E/F=1-473"/>
</dbReference>
<dbReference type="PDB" id="7XKR">
    <property type="method" value="EM"/>
    <property type="resolution" value="2.60 A"/>
    <property type="chains" value="D/E/F=1-473"/>
</dbReference>
<dbReference type="PDB" id="8HH1">
    <property type="method" value="EM"/>
    <property type="resolution" value="2.90 A"/>
    <property type="chains" value="D/E/F=1-473"/>
</dbReference>
<dbReference type="PDB" id="8HH2">
    <property type="method" value="EM"/>
    <property type="resolution" value="3.00 A"/>
    <property type="chains" value="D/E/F=1-473"/>
</dbReference>
<dbReference type="PDB" id="8HH3">
    <property type="method" value="EM"/>
    <property type="resolution" value="4.30 A"/>
    <property type="chains" value="D/E/F=1-473"/>
</dbReference>
<dbReference type="PDB" id="8HH4">
    <property type="method" value="EM"/>
    <property type="resolution" value="3.10 A"/>
    <property type="chains" value="D/E/F=1-473"/>
</dbReference>
<dbReference type="PDB" id="8HH5">
    <property type="method" value="EM"/>
    <property type="resolution" value="2.90 A"/>
    <property type="chains" value="D/E/F=1-473"/>
</dbReference>
<dbReference type="PDB" id="8HH6">
    <property type="method" value="EM"/>
    <property type="resolution" value="2.90 A"/>
    <property type="chains" value="D/E/F=1-473"/>
</dbReference>
<dbReference type="PDB" id="8HH7">
    <property type="method" value="EM"/>
    <property type="resolution" value="2.50 A"/>
    <property type="chains" value="D/E/F=1-473"/>
</dbReference>
<dbReference type="PDB" id="8HH8">
    <property type="method" value="EM"/>
    <property type="resolution" value="2.80 A"/>
    <property type="chains" value="D/E/F=1-473"/>
</dbReference>
<dbReference type="PDB" id="8HH9">
    <property type="method" value="EM"/>
    <property type="resolution" value="3.60 A"/>
    <property type="chains" value="D/E/F=1-473"/>
</dbReference>
<dbReference type="PDB" id="8HHA">
    <property type="method" value="EM"/>
    <property type="resolution" value="3.40 A"/>
    <property type="chains" value="D/E/F=1-473"/>
</dbReference>
<dbReference type="PDB" id="8HHB">
    <property type="method" value="EM"/>
    <property type="resolution" value="3.50 A"/>
    <property type="chains" value="D/E/F=1-473"/>
</dbReference>
<dbReference type="PDB" id="8HHC">
    <property type="method" value="EM"/>
    <property type="resolution" value="3.30 A"/>
    <property type="chains" value="D/E/F=1-473"/>
</dbReference>
<dbReference type="PDB" id="8SPV">
    <property type="method" value="EM"/>
    <property type="resolution" value="3.06 A"/>
    <property type="chains" value="D/E/F=1-470"/>
</dbReference>
<dbReference type="PDB" id="8SPW">
    <property type="method" value="EM"/>
    <property type="resolution" value="3.50 A"/>
    <property type="chains" value="D/E/F=1-471"/>
</dbReference>
<dbReference type="PDB" id="8SPX">
    <property type="method" value="EM"/>
    <property type="resolution" value="2.95 A"/>
    <property type="chains" value="D/E/F=1-471"/>
</dbReference>
<dbReference type="PDB" id="8U1H">
    <property type="method" value="EM"/>
    <property type="resolution" value="3.00 A"/>
    <property type="chains" value="D/E/F=1-473"/>
</dbReference>
<dbReference type="PDBsum" id="1SKY"/>
<dbReference type="PDBsum" id="7L1Q"/>
<dbReference type="PDBsum" id="7L1R"/>
<dbReference type="PDBsum" id="7L1S"/>
<dbReference type="PDBsum" id="7XKH"/>
<dbReference type="PDBsum" id="7XKO"/>
<dbReference type="PDBsum" id="7XKP"/>
<dbReference type="PDBsum" id="7XKQ"/>
<dbReference type="PDBsum" id="7XKR"/>
<dbReference type="PDBsum" id="8HH1"/>
<dbReference type="PDBsum" id="8HH2"/>
<dbReference type="PDBsum" id="8HH3"/>
<dbReference type="PDBsum" id="8HH4"/>
<dbReference type="PDBsum" id="8HH5"/>
<dbReference type="PDBsum" id="8HH6"/>
<dbReference type="PDBsum" id="8HH7"/>
<dbReference type="PDBsum" id="8HH8"/>
<dbReference type="PDBsum" id="8HH9"/>
<dbReference type="PDBsum" id="8HHA"/>
<dbReference type="PDBsum" id="8HHB"/>
<dbReference type="PDBsum" id="8HHC"/>
<dbReference type="PDBsum" id="8SPV"/>
<dbReference type="PDBsum" id="8SPW"/>
<dbReference type="PDBsum" id="8SPX"/>
<dbReference type="PDBsum" id="8U1H"/>
<dbReference type="BMRB" id="P07677"/>
<dbReference type="SMR" id="P07677"/>
<dbReference type="DIP" id="DIP-6215N"/>
<dbReference type="IntAct" id="P07677">
    <property type="interactions" value="2"/>
</dbReference>
<dbReference type="MINT" id="P07677"/>
<dbReference type="ChEMBL" id="CHEMBL3308988"/>
<dbReference type="TCDB" id="3.A.2.1.14">
    <property type="family name" value="the h+- or na+-translocating f-type, v-type and a-type atpase (f-atpase) superfamily"/>
</dbReference>
<dbReference type="SABIO-RK" id="P07677"/>
<dbReference type="EvolutionaryTrace" id="P07677"/>
<dbReference type="GO" id="GO:0005886">
    <property type="term" value="C:plasma membrane"/>
    <property type="evidence" value="ECO:0007669"/>
    <property type="project" value="UniProtKB-SubCell"/>
</dbReference>
<dbReference type="GO" id="GO:0045259">
    <property type="term" value="C:proton-transporting ATP synthase complex"/>
    <property type="evidence" value="ECO:0007669"/>
    <property type="project" value="UniProtKB-KW"/>
</dbReference>
<dbReference type="GO" id="GO:0005524">
    <property type="term" value="F:ATP binding"/>
    <property type="evidence" value="ECO:0007669"/>
    <property type="project" value="UniProtKB-UniRule"/>
</dbReference>
<dbReference type="GO" id="GO:0016887">
    <property type="term" value="F:ATP hydrolysis activity"/>
    <property type="evidence" value="ECO:0007669"/>
    <property type="project" value="InterPro"/>
</dbReference>
<dbReference type="GO" id="GO:0046933">
    <property type="term" value="F:proton-transporting ATP synthase activity, rotational mechanism"/>
    <property type="evidence" value="ECO:0007669"/>
    <property type="project" value="UniProtKB-UniRule"/>
</dbReference>
<dbReference type="CDD" id="cd18110">
    <property type="entry name" value="ATP-synt_F1_beta_C"/>
    <property type="match status" value="1"/>
</dbReference>
<dbReference type="CDD" id="cd18115">
    <property type="entry name" value="ATP-synt_F1_beta_N"/>
    <property type="match status" value="1"/>
</dbReference>
<dbReference type="CDD" id="cd01133">
    <property type="entry name" value="F1-ATPase_beta_CD"/>
    <property type="match status" value="1"/>
</dbReference>
<dbReference type="FunFam" id="1.10.1140.10:FF:000001">
    <property type="entry name" value="ATP synthase subunit beta"/>
    <property type="match status" value="1"/>
</dbReference>
<dbReference type="FunFam" id="2.40.10.170:FF:000005">
    <property type="entry name" value="ATP synthase subunit beta"/>
    <property type="match status" value="1"/>
</dbReference>
<dbReference type="FunFam" id="3.40.50.300:FF:000004">
    <property type="entry name" value="ATP synthase subunit beta"/>
    <property type="match status" value="1"/>
</dbReference>
<dbReference type="Gene3D" id="2.40.10.170">
    <property type="match status" value="1"/>
</dbReference>
<dbReference type="Gene3D" id="1.10.1140.10">
    <property type="entry name" value="Bovine Mitochondrial F1-atpase, Atp Synthase Beta Chain, Chain D, domain 3"/>
    <property type="match status" value="1"/>
</dbReference>
<dbReference type="Gene3D" id="3.40.50.300">
    <property type="entry name" value="P-loop containing nucleotide triphosphate hydrolases"/>
    <property type="match status" value="1"/>
</dbReference>
<dbReference type="HAMAP" id="MF_01347">
    <property type="entry name" value="ATP_synth_beta_bact"/>
    <property type="match status" value="1"/>
</dbReference>
<dbReference type="InterPro" id="IPR003593">
    <property type="entry name" value="AAA+_ATPase"/>
</dbReference>
<dbReference type="InterPro" id="IPR055190">
    <property type="entry name" value="ATP-synt_VA_C"/>
</dbReference>
<dbReference type="InterPro" id="IPR005722">
    <property type="entry name" value="ATP_synth_F1_bsu"/>
</dbReference>
<dbReference type="InterPro" id="IPR020003">
    <property type="entry name" value="ATPase_a/bsu_AS"/>
</dbReference>
<dbReference type="InterPro" id="IPR050053">
    <property type="entry name" value="ATPase_alpha/beta_chains"/>
</dbReference>
<dbReference type="InterPro" id="IPR004100">
    <property type="entry name" value="ATPase_F1/V1/A1_a/bsu_N"/>
</dbReference>
<dbReference type="InterPro" id="IPR036121">
    <property type="entry name" value="ATPase_F1/V1/A1_a/bsu_N_sf"/>
</dbReference>
<dbReference type="InterPro" id="IPR000194">
    <property type="entry name" value="ATPase_F1/V1/A1_a/bsu_nucl-bd"/>
</dbReference>
<dbReference type="InterPro" id="IPR024034">
    <property type="entry name" value="ATPase_F1/V1_b/a_C"/>
</dbReference>
<dbReference type="InterPro" id="IPR027417">
    <property type="entry name" value="P-loop_NTPase"/>
</dbReference>
<dbReference type="NCBIfam" id="TIGR01039">
    <property type="entry name" value="atpD"/>
    <property type="match status" value="1"/>
</dbReference>
<dbReference type="PANTHER" id="PTHR15184">
    <property type="entry name" value="ATP SYNTHASE"/>
    <property type="match status" value="1"/>
</dbReference>
<dbReference type="PANTHER" id="PTHR15184:SF71">
    <property type="entry name" value="ATP SYNTHASE SUBUNIT BETA, MITOCHONDRIAL"/>
    <property type="match status" value="1"/>
</dbReference>
<dbReference type="Pfam" id="PF00006">
    <property type="entry name" value="ATP-synt_ab"/>
    <property type="match status" value="1"/>
</dbReference>
<dbReference type="Pfam" id="PF02874">
    <property type="entry name" value="ATP-synt_ab_N"/>
    <property type="match status" value="1"/>
</dbReference>
<dbReference type="Pfam" id="PF22919">
    <property type="entry name" value="ATP-synt_VA_C"/>
    <property type="match status" value="1"/>
</dbReference>
<dbReference type="SMART" id="SM00382">
    <property type="entry name" value="AAA"/>
    <property type="match status" value="1"/>
</dbReference>
<dbReference type="SUPFAM" id="SSF47917">
    <property type="entry name" value="C-terminal domain of alpha and beta subunits of F1 ATP synthase"/>
    <property type="match status" value="1"/>
</dbReference>
<dbReference type="SUPFAM" id="SSF50615">
    <property type="entry name" value="N-terminal domain of alpha and beta subunits of F1 ATP synthase"/>
    <property type="match status" value="1"/>
</dbReference>
<dbReference type="SUPFAM" id="SSF52540">
    <property type="entry name" value="P-loop containing nucleoside triphosphate hydrolases"/>
    <property type="match status" value="1"/>
</dbReference>
<dbReference type="PROSITE" id="PS00152">
    <property type="entry name" value="ATPASE_ALPHA_BETA"/>
    <property type="match status" value="1"/>
</dbReference>
<sequence length="473" mass="51938">MTRGRVIQVMGPVVDVKFENGHLPAIYNALKIQHKARNENEVDIDLTLEVALHLGDDTVRTIAMASTDGLIRGMEVIDTGAPISVPVGQVTLGRVFNVLGEPIDLEGDIPADARRDPIHRPAPKFEELATEVEILETGIKVVDLLAPYIKGGKIGLFGGAGVGKTVLIQELIHNIAQEHGGISVFAGVGERTREGNDLYHEMKDSGVISKTAMVFGQMNEPPGARMRVALTGLTMAEYFRDEQGQDGLLFIDNIFRFTQAGSEVSALLGRMPSAIGYQPTLATEMGQLQERITSTAKGSITSIQAIYVPADDYTDPAPATTFSHLDATTNLERKLAEMGIYPAVDPLVSTSRALAPEIVGEEHYQVARKVQQTLERYKELQDIIAILGMDELSDEDKLVVHRARRIQFFLSQNFHVAEQFTGQPGSYVPVKETVRGFKEILEGKYDHLPEDRFRLVGRIEEVVEKAKAMGVEV</sequence>
<evidence type="ECO:0000255" key="1">
    <source>
        <dbReference type="HAMAP-Rule" id="MF_01347"/>
    </source>
</evidence>
<evidence type="ECO:0000269" key="2">
    <source>
    </source>
</evidence>
<evidence type="ECO:0007829" key="3">
    <source>
        <dbReference type="PDB" id="1SKY"/>
    </source>
</evidence>
<evidence type="ECO:0007829" key="4">
    <source>
        <dbReference type="PDB" id="7XKH"/>
    </source>
</evidence>
<evidence type="ECO:0007829" key="5">
    <source>
        <dbReference type="PDB" id="8SPV"/>
    </source>
</evidence>
<evidence type="ECO:0007829" key="6">
    <source>
        <dbReference type="PDB" id="8SPW"/>
    </source>
</evidence>
<evidence type="ECO:0007829" key="7">
    <source>
        <dbReference type="PDB" id="8SPX"/>
    </source>
</evidence>
<feature type="chain" id="PRO_0000144422" description="ATP synthase subunit beta">
    <location>
        <begin position="1"/>
        <end position="473"/>
    </location>
</feature>
<feature type="binding site" evidence="1">
    <location>
        <begin position="158"/>
        <end position="165"/>
    </location>
    <ligand>
        <name>ATP</name>
        <dbReference type="ChEBI" id="CHEBI:30616"/>
    </ligand>
</feature>
<feature type="strand" evidence="7">
    <location>
        <begin position="4"/>
        <end position="10"/>
    </location>
</feature>
<feature type="strand" evidence="7">
    <location>
        <begin position="13"/>
        <end position="17"/>
    </location>
</feature>
<feature type="strand" evidence="7">
    <location>
        <begin position="29"/>
        <end position="34"/>
    </location>
</feature>
<feature type="strand" evidence="7">
    <location>
        <begin position="38"/>
        <end position="40"/>
    </location>
</feature>
<feature type="strand" evidence="7">
    <location>
        <begin position="44"/>
        <end position="53"/>
    </location>
</feature>
<feature type="strand" evidence="7">
    <location>
        <begin position="58"/>
        <end position="65"/>
    </location>
</feature>
<feature type="strand" evidence="7">
    <location>
        <begin position="75"/>
        <end position="78"/>
    </location>
</feature>
<feature type="strand" evidence="7">
    <location>
        <begin position="80"/>
        <end position="82"/>
    </location>
</feature>
<feature type="strand" evidence="5">
    <location>
        <begin position="84"/>
        <end position="86"/>
    </location>
</feature>
<feature type="turn" evidence="7">
    <location>
        <begin position="90"/>
        <end position="93"/>
    </location>
</feature>
<feature type="strand" evidence="7">
    <location>
        <begin position="104"/>
        <end position="106"/>
    </location>
</feature>
<feature type="strand" evidence="5">
    <location>
        <begin position="115"/>
        <end position="118"/>
    </location>
</feature>
<feature type="turn" evidence="7">
    <location>
        <begin position="125"/>
        <end position="127"/>
    </location>
</feature>
<feature type="helix" evidence="7">
    <location>
        <begin position="140"/>
        <end position="145"/>
    </location>
</feature>
<feature type="strand" evidence="7">
    <location>
        <begin position="152"/>
        <end position="158"/>
    </location>
</feature>
<feature type="strand" evidence="4">
    <location>
        <begin position="160"/>
        <end position="162"/>
    </location>
</feature>
<feature type="helix" evidence="7">
    <location>
        <begin position="164"/>
        <end position="179"/>
    </location>
</feature>
<feature type="strand" evidence="7">
    <location>
        <begin position="182"/>
        <end position="187"/>
    </location>
</feature>
<feature type="helix" evidence="7">
    <location>
        <begin position="194"/>
        <end position="205"/>
    </location>
</feature>
<feature type="helix" evidence="7">
    <location>
        <begin position="208"/>
        <end position="210"/>
    </location>
</feature>
<feature type="strand" evidence="7">
    <location>
        <begin position="211"/>
        <end position="215"/>
    </location>
</feature>
<feature type="turn" evidence="7">
    <location>
        <begin position="217"/>
        <end position="219"/>
    </location>
</feature>
<feature type="helix" evidence="7">
    <location>
        <begin position="222"/>
        <end position="241"/>
    </location>
</feature>
<feature type="strand" evidence="7">
    <location>
        <begin position="247"/>
        <end position="252"/>
    </location>
</feature>
<feature type="helix" evidence="7">
    <location>
        <begin position="255"/>
        <end position="268"/>
    </location>
</feature>
<feature type="turn" evidence="7">
    <location>
        <begin position="274"/>
        <end position="276"/>
    </location>
</feature>
<feature type="helix" evidence="7">
    <location>
        <begin position="281"/>
        <end position="289"/>
    </location>
</feature>
<feature type="strand" evidence="7">
    <location>
        <begin position="295"/>
        <end position="297"/>
    </location>
</feature>
<feature type="strand" evidence="7">
    <location>
        <begin position="300"/>
        <end position="307"/>
    </location>
</feature>
<feature type="strand" evidence="7">
    <location>
        <begin position="309"/>
        <end position="311"/>
    </location>
</feature>
<feature type="strand" evidence="3">
    <location>
        <begin position="313"/>
        <end position="315"/>
    </location>
</feature>
<feature type="helix" evidence="7">
    <location>
        <begin position="316"/>
        <end position="322"/>
    </location>
</feature>
<feature type="strand" evidence="7">
    <location>
        <begin position="326"/>
        <end position="331"/>
    </location>
</feature>
<feature type="helix" evidence="7">
    <location>
        <begin position="336"/>
        <end position="338"/>
    </location>
</feature>
<feature type="turn" evidence="7">
    <location>
        <begin position="346"/>
        <end position="348"/>
    </location>
</feature>
<feature type="turn" evidence="7">
    <location>
        <begin position="356"/>
        <end position="358"/>
    </location>
</feature>
<feature type="helix" evidence="7">
    <location>
        <begin position="361"/>
        <end position="386"/>
    </location>
</feature>
<feature type="helix" evidence="7">
    <location>
        <begin position="388"/>
        <end position="390"/>
    </location>
</feature>
<feature type="helix" evidence="7">
    <location>
        <begin position="394"/>
        <end position="408"/>
    </location>
</feature>
<feature type="turn" evidence="7">
    <location>
        <begin position="416"/>
        <end position="420"/>
    </location>
</feature>
<feature type="strand" evidence="7">
    <location>
        <begin position="421"/>
        <end position="423"/>
    </location>
</feature>
<feature type="helix" evidence="7">
    <location>
        <begin position="430"/>
        <end position="441"/>
    </location>
</feature>
<feature type="turn" evidence="5">
    <location>
        <begin position="443"/>
        <end position="445"/>
    </location>
</feature>
<feature type="strand" evidence="6">
    <location>
        <begin position="446"/>
        <end position="448"/>
    </location>
</feature>
<feature type="helix" evidence="7">
    <location>
        <begin position="450"/>
        <end position="453"/>
    </location>
</feature>
<feature type="helix" evidence="7">
    <location>
        <begin position="459"/>
        <end position="469"/>
    </location>
</feature>
<protein>
    <recommendedName>
        <fullName evidence="1">ATP synthase subunit beta</fullName>
        <ecNumber evidence="1">7.1.2.2</ecNumber>
    </recommendedName>
    <alternativeName>
        <fullName evidence="1">ATP synthase F1 sector subunit beta</fullName>
    </alternativeName>
    <alternativeName>
        <fullName evidence="1">F-ATPase subunit beta</fullName>
    </alternativeName>
</protein>
<gene>
    <name evidence="1" type="primary">atpD</name>
</gene>
<organism>
    <name type="scientific">Bacillus sp. (strain PS3)</name>
    <dbReference type="NCBI Taxonomy" id="2334"/>
    <lineage>
        <taxon>Bacteria</taxon>
        <taxon>Bacillati</taxon>
        <taxon>Bacillota</taxon>
        <taxon>Bacilli</taxon>
        <taxon>Bacillales</taxon>
        <taxon>Bacillaceae</taxon>
        <taxon>Bacillus</taxon>
    </lineage>
</organism>
<name>ATPB_BACP3</name>
<comment type="function">
    <text evidence="1">Produces ATP from ADP in the presence of a proton gradient across the membrane. The catalytic sites are hosted primarily by the beta subunits.</text>
</comment>
<comment type="catalytic activity">
    <reaction evidence="1">
        <text>ATP + H2O + 4 H(+)(in) = ADP + phosphate + 5 H(+)(out)</text>
        <dbReference type="Rhea" id="RHEA:57720"/>
        <dbReference type="ChEBI" id="CHEBI:15377"/>
        <dbReference type="ChEBI" id="CHEBI:15378"/>
        <dbReference type="ChEBI" id="CHEBI:30616"/>
        <dbReference type="ChEBI" id="CHEBI:43474"/>
        <dbReference type="ChEBI" id="CHEBI:456216"/>
        <dbReference type="EC" id="7.1.2.2"/>
    </reaction>
</comment>
<comment type="subunit">
    <text evidence="1 2">F-type ATPases have 2 components, CF(1) - the catalytic core - and CF(0) - the membrane proton channel. CF(1) has five subunits: alpha(3), beta(3), gamma(1), delta(1), epsilon(1). CF(0) has three main subunits: a(1), b(2) and c(9-12). The alpha and beta chains form an alternating ring which encloses part of the gamma chain. CF(1) is attached to CF(0) by a central stalk formed by the gamma and epsilon chains, while a peripheral stalk is formed by the delta and b chains.</text>
</comment>
<comment type="interaction">
    <interactant intactId="EBI-8612954">
        <id>P07677</id>
    </interactant>
    <interactant intactId="EBI-15654225">
        <id>P09222</id>
        <label>atpG</label>
    </interactant>
    <organismsDiffer>false</organismsDiffer>
    <experiments>2</experiments>
</comment>
<comment type="subcellular location">
    <subcellularLocation>
        <location evidence="1">Cell membrane</location>
        <topology evidence="1">Peripheral membrane protein</topology>
    </subcellularLocation>
</comment>
<comment type="similarity">
    <text evidence="1">Belongs to the ATPase alpha/beta chains family.</text>
</comment>
<accession>P07677</accession>